<comment type="function">
    <text>Not known; could confer methyl methane sulfonate (MMS), mitomycin C (MC), and UV resistance.</text>
</comment>
<comment type="similarity">
    <text evidence="1">Belongs to the CAPAB/TerDEXZ family.</text>
</comment>
<sequence length="139" mass="15430">MVHNDLDFIFYNNLKHSSGAIEHLGDNLTGDGDXDDEEIIIDLSLIPQNISRINFTVTIHEAGERSQNFGQVSNAYVRVVNSDNSQELLKYDLGEDFSIETAIVVAEIYRHNGEWKFNAIGSGFQGGLAALCRNFGLNV</sequence>
<feature type="chain" id="PRO_0000170787" description="Chemical-damaging agent resistance protein B">
    <location>
        <begin position="1"/>
        <end position="139"/>
    </location>
</feature>
<protein>
    <recommendedName>
        <fullName>Chemical-damaging agent resistance protein B</fullName>
    </recommendedName>
</protein>
<accession>Q45811</accession>
<dbReference type="EMBL" id="X74918">
    <property type="protein sequence ID" value="CAA52879.1"/>
    <property type="molecule type" value="Genomic_DNA"/>
</dbReference>
<dbReference type="PIR" id="I40604">
    <property type="entry name" value="I40604"/>
</dbReference>
<dbReference type="CDD" id="cd06974">
    <property type="entry name" value="TerD_like"/>
    <property type="match status" value="1"/>
</dbReference>
<dbReference type="Gene3D" id="2.60.60.30">
    <property type="entry name" value="sav2460 like domains"/>
    <property type="match status" value="1"/>
</dbReference>
<dbReference type="InterPro" id="IPR051324">
    <property type="entry name" value="Stress/Tellurium_Resist"/>
</dbReference>
<dbReference type="InterPro" id="IPR003325">
    <property type="entry name" value="TerD"/>
</dbReference>
<dbReference type="PANTHER" id="PTHR32097">
    <property type="entry name" value="CAMP-BINDING PROTEIN 1-RELATED"/>
    <property type="match status" value="1"/>
</dbReference>
<dbReference type="PANTHER" id="PTHR32097:SF14">
    <property type="entry name" value="TELLURIUM RESISTANCE PROTEIN TERD"/>
    <property type="match status" value="1"/>
</dbReference>
<dbReference type="Pfam" id="PF02342">
    <property type="entry name" value="TerD"/>
    <property type="match status" value="1"/>
</dbReference>
<organism>
    <name type="scientific">Clostridium acetobutylicum</name>
    <dbReference type="NCBI Taxonomy" id="1488"/>
    <lineage>
        <taxon>Bacteria</taxon>
        <taxon>Bacillati</taxon>
        <taxon>Bacillota</taxon>
        <taxon>Clostridia</taxon>
        <taxon>Eubacteriales</taxon>
        <taxon>Clostridiaceae</taxon>
        <taxon>Clostridium</taxon>
    </lineage>
</organism>
<proteinExistence type="inferred from homology"/>
<evidence type="ECO:0000305" key="1"/>
<reference key="1">
    <citation type="journal article" date="1994" name="Curr. Microbiol.">
        <title>Cloning and sequencing of a chromosomal fragment from Clostridium acetobutylicum strain ABKn8 conferring chemical-damaging agents and UV resistance to E. coli recA strains.</title>
        <authorList>
            <person name="Azeddoug H."/>
            <person name="Reysset G."/>
        </authorList>
    </citation>
    <scope>NUCLEOTIDE SEQUENCE [GENOMIC DNA]</scope>
    <source>
        <strain>ABKn8</strain>
    </source>
</reference>
<name>CDRB_CLOAT</name>